<evidence type="ECO:0000255" key="1">
    <source>
        <dbReference type="HAMAP-Rule" id="MF_00277"/>
    </source>
</evidence>
<evidence type="ECO:0000255" key="2">
    <source>
        <dbReference type="PROSITE-ProRule" id="PRU01175"/>
    </source>
</evidence>
<gene>
    <name evidence="1" type="primary">glnD</name>
    <name type="ordered locus">PSPPH_3842</name>
</gene>
<organism>
    <name type="scientific">Pseudomonas savastanoi pv. phaseolicola (strain 1448A / Race 6)</name>
    <name type="common">Pseudomonas syringae pv. phaseolicola (strain 1448A / Race 6)</name>
    <dbReference type="NCBI Taxonomy" id="264730"/>
    <lineage>
        <taxon>Bacteria</taxon>
        <taxon>Pseudomonadati</taxon>
        <taxon>Pseudomonadota</taxon>
        <taxon>Gammaproteobacteria</taxon>
        <taxon>Pseudomonadales</taxon>
        <taxon>Pseudomonadaceae</taxon>
        <taxon>Pseudomonas</taxon>
    </lineage>
</organism>
<dbReference type="EC" id="2.7.7.59" evidence="1"/>
<dbReference type="EC" id="3.1.4.-" evidence="1"/>
<dbReference type="EMBL" id="CP000058">
    <property type="protein sequence ID" value="AAZ35473.1"/>
    <property type="molecule type" value="Genomic_DNA"/>
</dbReference>
<dbReference type="RefSeq" id="WP_004667439.1">
    <property type="nucleotide sequence ID" value="NC_005773.3"/>
</dbReference>
<dbReference type="SMR" id="Q48F57"/>
<dbReference type="KEGG" id="psp:PSPPH_3842"/>
<dbReference type="eggNOG" id="COG2844">
    <property type="taxonomic scope" value="Bacteria"/>
</dbReference>
<dbReference type="HOGENOM" id="CLU_012833_0_0_6"/>
<dbReference type="Proteomes" id="UP000000551">
    <property type="component" value="Chromosome"/>
</dbReference>
<dbReference type="GO" id="GO:0008773">
    <property type="term" value="F:[protein-PII] uridylyltransferase activity"/>
    <property type="evidence" value="ECO:0007669"/>
    <property type="project" value="UniProtKB-UniRule"/>
</dbReference>
<dbReference type="GO" id="GO:0008081">
    <property type="term" value="F:phosphoric diester hydrolase activity"/>
    <property type="evidence" value="ECO:0007669"/>
    <property type="project" value="UniProtKB-UniRule"/>
</dbReference>
<dbReference type="GO" id="GO:0006808">
    <property type="term" value="P:regulation of nitrogen utilization"/>
    <property type="evidence" value="ECO:0007669"/>
    <property type="project" value="UniProtKB-UniRule"/>
</dbReference>
<dbReference type="CDD" id="cd04899">
    <property type="entry name" value="ACT_ACR-UUR-like_2"/>
    <property type="match status" value="1"/>
</dbReference>
<dbReference type="CDD" id="cd04900">
    <property type="entry name" value="ACT_UUR-like_1"/>
    <property type="match status" value="1"/>
</dbReference>
<dbReference type="CDD" id="cd00077">
    <property type="entry name" value="HDc"/>
    <property type="match status" value="1"/>
</dbReference>
<dbReference type="CDD" id="cd05401">
    <property type="entry name" value="NT_GlnE_GlnD_like"/>
    <property type="match status" value="1"/>
</dbReference>
<dbReference type="FunFam" id="1.10.3090.10:FF:000005">
    <property type="entry name" value="Bifunctional uridylyltransferase/uridylyl-removing enzyme"/>
    <property type="match status" value="1"/>
</dbReference>
<dbReference type="Gene3D" id="3.30.460.10">
    <property type="entry name" value="Beta Polymerase, domain 2"/>
    <property type="match status" value="1"/>
</dbReference>
<dbReference type="Gene3D" id="1.10.3090.10">
    <property type="entry name" value="cca-adding enzyme, domain 2"/>
    <property type="match status" value="1"/>
</dbReference>
<dbReference type="HAMAP" id="MF_00277">
    <property type="entry name" value="PII_uridylyl_transf"/>
    <property type="match status" value="1"/>
</dbReference>
<dbReference type="InterPro" id="IPR045865">
    <property type="entry name" value="ACT-like_dom_sf"/>
</dbReference>
<dbReference type="InterPro" id="IPR002912">
    <property type="entry name" value="ACT_dom"/>
</dbReference>
<dbReference type="InterPro" id="IPR003607">
    <property type="entry name" value="HD/PDEase_dom"/>
</dbReference>
<dbReference type="InterPro" id="IPR006674">
    <property type="entry name" value="HD_domain"/>
</dbReference>
<dbReference type="InterPro" id="IPR043519">
    <property type="entry name" value="NT_sf"/>
</dbReference>
<dbReference type="InterPro" id="IPR013546">
    <property type="entry name" value="PII_UdlTrfase/GS_AdlTrfase"/>
</dbReference>
<dbReference type="InterPro" id="IPR002934">
    <property type="entry name" value="Polymerase_NTP_transf_dom"/>
</dbReference>
<dbReference type="InterPro" id="IPR010043">
    <property type="entry name" value="UTase/UR"/>
</dbReference>
<dbReference type="NCBIfam" id="NF001366">
    <property type="entry name" value="PRK00275.1"/>
    <property type="match status" value="1"/>
</dbReference>
<dbReference type="NCBIfam" id="TIGR01693">
    <property type="entry name" value="UTase_glnD"/>
    <property type="match status" value="1"/>
</dbReference>
<dbReference type="PANTHER" id="PTHR47320">
    <property type="entry name" value="BIFUNCTIONAL URIDYLYLTRANSFERASE/URIDYLYL-REMOVING ENZYME"/>
    <property type="match status" value="1"/>
</dbReference>
<dbReference type="PANTHER" id="PTHR47320:SF1">
    <property type="entry name" value="BIFUNCTIONAL URIDYLYLTRANSFERASE_URIDYLYL-REMOVING ENZYME"/>
    <property type="match status" value="1"/>
</dbReference>
<dbReference type="Pfam" id="PF01842">
    <property type="entry name" value="ACT"/>
    <property type="match status" value="1"/>
</dbReference>
<dbReference type="Pfam" id="PF08335">
    <property type="entry name" value="GlnD_UR_UTase"/>
    <property type="match status" value="1"/>
</dbReference>
<dbReference type="Pfam" id="PF01966">
    <property type="entry name" value="HD"/>
    <property type="match status" value="1"/>
</dbReference>
<dbReference type="Pfam" id="PF01909">
    <property type="entry name" value="NTP_transf_2"/>
    <property type="match status" value="1"/>
</dbReference>
<dbReference type="PIRSF" id="PIRSF006288">
    <property type="entry name" value="PII_uridyltransf"/>
    <property type="match status" value="1"/>
</dbReference>
<dbReference type="SMART" id="SM00471">
    <property type="entry name" value="HDc"/>
    <property type="match status" value="1"/>
</dbReference>
<dbReference type="SUPFAM" id="SSF55021">
    <property type="entry name" value="ACT-like"/>
    <property type="match status" value="1"/>
</dbReference>
<dbReference type="SUPFAM" id="SSF109604">
    <property type="entry name" value="HD-domain/PDEase-like"/>
    <property type="match status" value="1"/>
</dbReference>
<dbReference type="SUPFAM" id="SSF81301">
    <property type="entry name" value="Nucleotidyltransferase"/>
    <property type="match status" value="1"/>
</dbReference>
<dbReference type="SUPFAM" id="SSF81593">
    <property type="entry name" value="Nucleotidyltransferase substrate binding subunit/domain"/>
    <property type="match status" value="1"/>
</dbReference>
<dbReference type="PROSITE" id="PS51671">
    <property type="entry name" value="ACT"/>
    <property type="match status" value="2"/>
</dbReference>
<dbReference type="PROSITE" id="PS51831">
    <property type="entry name" value="HD"/>
    <property type="match status" value="1"/>
</dbReference>
<protein>
    <recommendedName>
        <fullName evidence="1">Bifunctional uridylyltransferase/uridylyl-removing enzyme</fullName>
        <shortName evidence="1">UTase/UR</shortName>
    </recommendedName>
    <alternativeName>
        <fullName evidence="1">Bifunctional [protein-PII] modification enzyme</fullName>
    </alternativeName>
    <alternativeName>
        <fullName evidence="1">Bifunctional nitrogen sensor protein</fullName>
    </alternativeName>
    <domain>
        <recommendedName>
            <fullName evidence="1">[Protein-PII] uridylyltransferase</fullName>
            <shortName evidence="1">PII uridylyltransferase</shortName>
            <shortName evidence="1">UTase</shortName>
            <ecNumber evidence="1">2.7.7.59</ecNumber>
        </recommendedName>
    </domain>
    <domain>
        <recommendedName>
            <fullName evidence="1">[Protein-PII]-UMP uridylyl-removing enzyme</fullName>
            <shortName evidence="1">UR</shortName>
            <ecNumber evidence="1">3.1.4.-</ecNumber>
        </recommendedName>
    </domain>
</protein>
<feature type="chain" id="PRO_0000231687" description="Bifunctional uridylyltransferase/uridylyl-removing enzyme">
    <location>
        <begin position="1"/>
        <end position="898"/>
    </location>
</feature>
<feature type="domain" description="HD" evidence="2">
    <location>
        <begin position="460"/>
        <end position="582"/>
    </location>
</feature>
<feature type="domain" description="ACT 1" evidence="1">
    <location>
        <begin position="705"/>
        <end position="783"/>
    </location>
</feature>
<feature type="domain" description="ACT 2" evidence="1">
    <location>
        <begin position="815"/>
        <end position="891"/>
    </location>
</feature>
<feature type="region of interest" description="Uridylyltransferase">
    <location>
        <begin position="1"/>
        <end position="341"/>
    </location>
</feature>
<feature type="region of interest" description="Uridylyl-removing">
    <location>
        <begin position="342"/>
        <end position="704"/>
    </location>
</feature>
<name>GLND_PSE14</name>
<keyword id="KW-0378">Hydrolase</keyword>
<keyword id="KW-0460">Magnesium</keyword>
<keyword id="KW-0511">Multifunctional enzyme</keyword>
<keyword id="KW-0548">Nucleotidyltransferase</keyword>
<keyword id="KW-0677">Repeat</keyword>
<keyword id="KW-0808">Transferase</keyword>
<proteinExistence type="inferred from homology"/>
<accession>Q48F57</accession>
<sequence>MPQVDPDLFDRGQFQAELALKASPIAAFKKAIRRAKDVLDDRFKSGRDIRRLIEDRAWFVDNILQKAWDQFEWSEDADIALLAVGGYGRGELHPYSDIDLLILLDSDDHEVFREPIERFLTLLWDIGLEVGQSVRSVNECAQEGRADLTVITNLMESRTIAGPEHLRQRMLEVTSTEHMWPSKEFFLAKHAEQKKRHHKYNDTEYNLEPNVKGSPGGLRDIQTILWVARRQYGTLNLHALAGEGFLLGSENALLASSQEFLWKVRYALHMLAGRSEDRLLFDYQVRIAGLLGYEDSDAKLAIERFMQKYYRVVMSIAELSDLIIQHFEEVILSDDSGTAQPINSRFQLHDGYIEATNPNVFKRTPFAMIEIFVLMAQHPEIKGVRADTIRLLREHRHLINDDFRNDIRNTSLFIELFKCETGIHRNLRRMNRYGILGLYLPEFGHIVGQMQHDLFHIYTVDAHTLNLIKHLRKLQYTEVSEKFPLASKIMARLPKPELIYLAGLYHDIGKGRGGDHSELGAIDAQAFGTRHHLPDWDTRLIVWLVSNHLVMSTTAQRKDLSDPQVIHDFAQFVGDEVHLDYLYVLTVADINATNPTLWNSWRASLLRQLYTETKRALRRGLENPVDREEQIRRTQTAALDILVRNGTDPDDVEQLWSALGDDYFLRHTAGDVAWHSDAILQQPADGGPLVLIKETTQREFEGGTQIFIYAPDQHDFFAVTVAAMDQLNLNIHDARIITSSSKFTLDTYIVLDNEGGSIGDNPERVQEIRNGLTEALRNPDDYPTIIKRRVPRQLKHFAFAPQVTIHNDAQRPVTVLELLAPDRPGLLARIGKIFLEFDLSLQNAKIATLGERVEDVFFITDANNHPLSDPQLCSQLQDAIVKQLSVNSEPGHDLRISI</sequence>
<comment type="function">
    <text evidence="1">Modifies, by uridylylation and deuridylylation, the PII regulatory proteins (GlnB and homologs), in response to the nitrogen status of the cell that GlnD senses through the glutamine level. Under low glutamine levels, catalyzes the conversion of the PII proteins and UTP to PII-UMP and PPi, while under higher glutamine levels, GlnD hydrolyzes PII-UMP to PII and UMP (deuridylylation). Thus, controls uridylylation state and activity of the PII proteins, and plays an important role in the regulation of nitrogen assimilation and metabolism.</text>
</comment>
<comment type="catalytic activity">
    <reaction evidence="1">
        <text>[protein-PII]-L-tyrosine + UTP = [protein-PII]-uridylyl-L-tyrosine + diphosphate</text>
        <dbReference type="Rhea" id="RHEA:13673"/>
        <dbReference type="Rhea" id="RHEA-COMP:12147"/>
        <dbReference type="Rhea" id="RHEA-COMP:12148"/>
        <dbReference type="ChEBI" id="CHEBI:33019"/>
        <dbReference type="ChEBI" id="CHEBI:46398"/>
        <dbReference type="ChEBI" id="CHEBI:46858"/>
        <dbReference type="ChEBI" id="CHEBI:90602"/>
        <dbReference type="EC" id="2.7.7.59"/>
    </reaction>
</comment>
<comment type="catalytic activity">
    <reaction evidence="1">
        <text>[protein-PII]-uridylyl-L-tyrosine + H2O = [protein-PII]-L-tyrosine + UMP + H(+)</text>
        <dbReference type="Rhea" id="RHEA:48600"/>
        <dbReference type="Rhea" id="RHEA-COMP:12147"/>
        <dbReference type="Rhea" id="RHEA-COMP:12148"/>
        <dbReference type="ChEBI" id="CHEBI:15377"/>
        <dbReference type="ChEBI" id="CHEBI:15378"/>
        <dbReference type="ChEBI" id="CHEBI:46858"/>
        <dbReference type="ChEBI" id="CHEBI:57865"/>
        <dbReference type="ChEBI" id="CHEBI:90602"/>
    </reaction>
</comment>
<comment type="cofactor">
    <cofactor evidence="1">
        <name>Mg(2+)</name>
        <dbReference type="ChEBI" id="CHEBI:18420"/>
    </cofactor>
</comment>
<comment type="activity regulation">
    <text evidence="1">Uridylyltransferase (UTase) activity is inhibited by glutamine, while glutamine activates uridylyl-removing (UR) activity.</text>
</comment>
<comment type="domain">
    <text evidence="1">Has four distinct domains: an N-terminal nucleotidyltransferase (NT) domain responsible for UTase activity, a central HD domain that encodes UR activity, and two C-terminal ACT domains that seem to have a role in glutamine sensing.</text>
</comment>
<comment type="similarity">
    <text evidence="1">Belongs to the GlnD family.</text>
</comment>
<reference key="1">
    <citation type="journal article" date="2005" name="J. Bacteriol.">
        <title>Whole-genome sequence analysis of Pseudomonas syringae pv. phaseolicola 1448A reveals divergence among pathovars in genes involved in virulence and transposition.</title>
        <authorList>
            <person name="Joardar V."/>
            <person name="Lindeberg M."/>
            <person name="Jackson R.W."/>
            <person name="Selengut J."/>
            <person name="Dodson R."/>
            <person name="Brinkac L.M."/>
            <person name="Daugherty S.C."/>
            <person name="DeBoy R.T."/>
            <person name="Durkin A.S."/>
            <person name="Gwinn Giglio M."/>
            <person name="Madupu R."/>
            <person name="Nelson W.C."/>
            <person name="Rosovitz M.J."/>
            <person name="Sullivan S.A."/>
            <person name="Crabtree J."/>
            <person name="Creasy T."/>
            <person name="Davidsen T.M."/>
            <person name="Haft D.H."/>
            <person name="Zafar N."/>
            <person name="Zhou L."/>
            <person name="Halpin R."/>
            <person name="Holley T."/>
            <person name="Khouri H.M."/>
            <person name="Feldblyum T.V."/>
            <person name="White O."/>
            <person name="Fraser C.M."/>
            <person name="Chatterjee A.K."/>
            <person name="Cartinhour S."/>
            <person name="Schneider D."/>
            <person name="Mansfield J.W."/>
            <person name="Collmer A."/>
            <person name="Buell R."/>
        </authorList>
    </citation>
    <scope>NUCLEOTIDE SEQUENCE [LARGE SCALE GENOMIC DNA]</scope>
    <source>
        <strain>1448A / Race 6</strain>
    </source>
</reference>